<feature type="chain" id="PRO_1000146754" description="Protein AaeX">
    <location>
        <begin position="1"/>
        <end position="67"/>
    </location>
</feature>
<feature type="transmembrane region" description="Helical" evidence="1">
    <location>
        <begin position="3"/>
        <end position="23"/>
    </location>
</feature>
<feature type="transmembrane region" description="Helical" evidence="1">
    <location>
        <begin position="43"/>
        <end position="63"/>
    </location>
</feature>
<proteinExistence type="inferred from homology"/>
<reference key="1">
    <citation type="journal article" date="2009" name="PLoS Genet.">
        <title>Organised genome dynamics in the Escherichia coli species results in highly diverse adaptive paths.</title>
        <authorList>
            <person name="Touchon M."/>
            <person name="Hoede C."/>
            <person name="Tenaillon O."/>
            <person name="Barbe V."/>
            <person name="Baeriswyl S."/>
            <person name="Bidet P."/>
            <person name="Bingen E."/>
            <person name="Bonacorsi S."/>
            <person name="Bouchier C."/>
            <person name="Bouvet O."/>
            <person name="Calteau A."/>
            <person name="Chiapello H."/>
            <person name="Clermont O."/>
            <person name="Cruveiller S."/>
            <person name="Danchin A."/>
            <person name="Diard M."/>
            <person name="Dossat C."/>
            <person name="Karoui M.E."/>
            <person name="Frapy E."/>
            <person name="Garry L."/>
            <person name="Ghigo J.M."/>
            <person name="Gilles A.M."/>
            <person name="Johnson J."/>
            <person name="Le Bouguenec C."/>
            <person name="Lescat M."/>
            <person name="Mangenot S."/>
            <person name="Martinez-Jehanne V."/>
            <person name="Matic I."/>
            <person name="Nassif X."/>
            <person name="Oztas S."/>
            <person name="Petit M.A."/>
            <person name="Pichon C."/>
            <person name="Rouy Z."/>
            <person name="Ruf C.S."/>
            <person name="Schneider D."/>
            <person name="Tourret J."/>
            <person name="Vacherie B."/>
            <person name="Vallenet D."/>
            <person name="Medigue C."/>
            <person name="Rocha E.P.C."/>
            <person name="Denamur E."/>
        </authorList>
    </citation>
    <scope>NUCLEOTIDE SEQUENCE [LARGE SCALE GENOMIC DNA]</scope>
    <source>
        <strain>IAI1</strain>
    </source>
</reference>
<gene>
    <name evidence="1" type="primary">aaeX</name>
    <name type="ordered locus">ECIAI1_3384</name>
</gene>
<name>AAEX_ECO8A</name>
<accession>B7M0V4</accession>
<keyword id="KW-1003">Cell membrane</keyword>
<keyword id="KW-0472">Membrane</keyword>
<keyword id="KW-0812">Transmembrane</keyword>
<keyword id="KW-1133">Transmembrane helix</keyword>
<organism>
    <name type="scientific">Escherichia coli O8 (strain IAI1)</name>
    <dbReference type="NCBI Taxonomy" id="585034"/>
    <lineage>
        <taxon>Bacteria</taxon>
        <taxon>Pseudomonadati</taxon>
        <taxon>Pseudomonadota</taxon>
        <taxon>Gammaproteobacteria</taxon>
        <taxon>Enterobacterales</taxon>
        <taxon>Enterobacteriaceae</taxon>
        <taxon>Escherichia</taxon>
    </lineage>
</organism>
<dbReference type="EMBL" id="CU928160">
    <property type="protein sequence ID" value="CAR00198.1"/>
    <property type="molecule type" value="Genomic_DNA"/>
</dbReference>
<dbReference type="RefSeq" id="WP_000051841.1">
    <property type="nucleotide sequence ID" value="NC_011741.1"/>
</dbReference>
<dbReference type="GeneID" id="93778743"/>
<dbReference type="KEGG" id="ecr:ECIAI1_3384"/>
<dbReference type="HOGENOM" id="CLU_188292_0_0_6"/>
<dbReference type="GO" id="GO:0005886">
    <property type="term" value="C:plasma membrane"/>
    <property type="evidence" value="ECO:0007669"/>
    <property type="project" value="UniProtKB-SubCell"/>
</dbReference>
<dbReference type="HAMAP" id="MF_01546">
    <property type="entry name" value="AaeX"/>
    <property type="match status" value="1"/>
</dbReference>
<dbReference type="InterPro" id="IPR012451">
    <property type="entry name" value="DUF1656"/>
</dbReference>
<dbReference type="NCBIfam" id="NF008615">
    <property type="entry name" value="PRK11594.1"/>
    <property type="match status" value="1"/>
</dbReference>
<dbReference type="Pfam" id="PF07869">
    <property type="entry name" value="DUF1656"/>
    <property type="match status" value="1"/>
</dbReference>
<comment type="subcellular location">
    <subcellularLocation>
        <location evidence="1">Cell membrane</location>
        <topology evidence="1">Multi-pass membrane protein</topology>
    </subcellularLocation>
</comment>
<comment type="induction">
    <text evidence="1">Positively coregulated with aaeA and aaeB by AaeR.</text>
</comment>
<comment type="similarity">
    <text evidence="1">Belongs to the AaeX family.</text>
</comment>
<protein>
    <recommendedName>
        <fullName evidence="1">Protein AaeX</fullName>
    </recommendedName>
</protein>
<sequence length="67" mass="7847">MSLFPVIVVFGLSFPPIFFELLLSLAIFWLVRRVLVPTGIYDFVWHPALFNTALYCCLFYLISRLFV</sequence>
<evidence type="ECO:0000255" key="1">
    <source>
        <dbReference type="HAMAP-Rule" id="MF_01546"/>
    </source>
</evidence>